<sequence>MPTINQLIRKPRKSQTEKTASPALQNCPQRRGICTRVMTVTPKKPNSALRKVARVRLSNGFEVTAYIPGIGHNLQEHSVVLIRGGRVKDLPGVRYHIVRGAKDTLGVNNRKKGRSKYGTKKPKA</sequence>
<organism>
    <name type="scientific">Borreliella afzelii (strain PKo)</name>
    <name type="common">Borrelia afzelii</name>
    <dbReference type="NCBI Taxonomy" id="390236"/>
    <lineage>
        <taxon>Bacteria</taxon>
        <taxon>Pseudomonadati</taxon>
        <taxon>Spirochaetota</taxon>
        <taxon>Spirochaetia</taxon>
        <taxon>Spirochaetales</taxon>
        <taxon>Borreliaceae</taxon>
        <taxon>Borreliella</taxon>
    </lineage>
</organism>
<name>RS12_BORAP</name>
<reference key="1">
    <citation type="journal article" date="2006" name="BMC Genomics">
        <title>Comparative genome analysis: selection pressure on the Borrelia vls cassettes is essential for infectivity.</title>
        <authorList>
            <person name="Gloeckner G."/>
            <person name="Schulte-Spechtel U."/>
            <person name="Schilhabel M."/>
            <person name="Felder M."/>
            <person name="Suehnel J."/>
            <person name="Wilske B."/>
            <person name="Platzer M."/>
        </authorList>
    </citation>
    <scope>NUCLEOTIDE SEQUENCE [LARGE SCALE GENOMIC DNA]</scope>
    <source>
        <strain>PKo</strain>
    </source>
</reference>
<reference key="2">
    <citation type="journal article" date="2011" name="J. Bacteriol.">
        <title>Whole-genome sequences of two Borrelia afzelii and two Borrelia garinii Lyme disease agent isolates.</title>
        <authorList>
            <person name="Casjens S.R."/>
            <person name="Mongodin E.F."/>
            <person name="Qiu W.G."/>
            <person name="Dunn J.J."/>
            <person name="Luft B.J."/>
            <person name="Fraser-Liggett C.M."/>
            <person name="Schutzer S.E."/>
        </authorList>
    </citation>
    <scope>NUCLEOTIDE SEQUENCE [LARGE SCALE GENOMIC DNA]</scope>
    <source>
        <strain>PKo</strain>
    </source>
</reference>
<proteinExistence type="inferred from homology"/>
<feature type="chain" id="PRO_0000263544" description="Small ribosomal subunit protein uS12">
    <location>
        <begin position="1"/>
        <end position="124"/>
    </location>
</feature>
<feature type="region of interest" description="Disordered" evidence="3">
    <location>
        <begin position="1"/>
        <end position="27"/>
    </location>
</feature>
<feature type="compositionally biased region" description="Polar residues" evidence="3">
    <location>
        <begin position="17"/>
        <end position="27"/>
    </location>
</feature>
<feature type="modified residue" description="3-methylthioaspartic acid" evidence="1">
    <location>
        <position position="89"/>
    </location>
</feature>
<gene>
    <name evidence="2" type="primary">rpsL</name>
    <name type="ordered locus">BAPKO_0402</name>
    <name type="ordered locus">BafPKo_0389</name>
</gene>
<evidence type="ECO:0000250" key="1"/>
<evidence type="ECO:0000255" key="2">
    <source>
        <dbReference type="HAMAP-Rule" id="MF_00403"/>
    </source>
</evidence>
<evidence type="ECO:0000256" key="3">
    <source>
        <dbReference type="SAM" id="MobiDB-lite"/>
    </source>
</evidence>
<evidence type="ECO:0000305" key="4"/>
<keyword id="KW-0488">Methylation</keyword>
<keyword id="KW-0687">Ribonucleoprotein</keyword>
<keyword id="KW-0689">Ribosomal protein</keyword>
<keyword id="KW-0694">RNA-binding</keyword>
<keyword id="KW-0699">rRNA-binding</keyword>
<keyword id="KW-0820">tRNA-binding</keyword>
<dbReference type="EMBL" id="CP000395">
    <property type="protein sequence ID" value="ABH01658.1"/>
    <property type="molecule type" value="Genomic_DNA"/>
</dbReference>
<dbReference type="EMBL" id="CP002933">
    <property type="protein sequence ID" value="AEL69615.1"/>
    <property type="molecule type" value="Genomic_DNA"/>
</dbReference>
<dbReference type="RefSeq" id="WP_002656492.1">
    <property type="nucleotide sequence ID" value="NZ_CP160066.1"/>
</dbReference>
<dbReference type="SMR" id="Q0SNC0"/>
<dbReference type="STRING" id="29518.BLA32_02370"/>
<dbReference type="GeneID" id="83865854"/>
<dbReference type="KEGG" id="baf:BAPKO_0402"/>
<dbReference type="KEGG" id="bafz:BafPKo_0389"/>
<dbReference type="PATRIC" id="fig|390236.22.peg.382"/>
<dbReference type="eggNOG" id="COG0048">
    <property type="taxonomic scope" value="Bacteria"/>
</dbReference>
<dbReference type="HOGENOM" id="CLU_104295_1_2_12"/>
<dbReference type="OrthoDB" id="9802366at2"/>
<dbReference type="Proteomes" id="UP000005216">
    <property type="component" value="Chromosome"/>
</dbReference>
<dbReference type="GO" id="GO:0015935">
    <property type="term" value="C:small ribosomal subunit"/>
    <property type="evidence" value="ECO:0007669"/>
    <property type="project" value="InterPro"/>
</dbReference>
<dbReference type="GO" id="GO:0019843">
    <property type="term" value="F:rRNA binding"/>
    <property type="evidence" value="ECO:0007669"/>
    <property type="project" value="UniProtKB-UniRule"/>
</dbReference>
<dbReference type="GO" id="GO:0003735">
    <property type="term" value="F:structural constituent of ribosome"/>
    <property type="evidence" value="ECO:0007669"/>
    <property type="project" value="InterPro"/>
</dbReference>
<dbReference type="GO" id="GO:0000049">
    <property type="term" value="F:tRNA binding"/>
    <property type="evidence" value="ECO:0007669"/>
    <property type="project" value="UniProtKB-UniRule"/>
</dbReference>
<dbReference type="GO" id="GO:0006412">
    <property type="term" value="P:translation"/>
    <property type="evidence" value="ECO:0007669"/>
    <property type="project" value="UniProtKB-UniRule"/>
</dbReference>
<dbReference type="CDD" id="cd03368">
    <property type="entry name" value="Ribosomal_S12"/>
    <property type="match status" value="1"/>
</dbReference>
<dbReference type="FunFam" id="2.40.50.140:FF:000001">
    <property type="entry name" value="30S ribosomal protein S12"/>
    <property type="match status" value="1"/>
</dbReference>
<dbReference type="Gene3D" id="2.40.50.140">
    <property type="entry name" value="Nucleic acid-binding proteins"/>
    <property type="match status" value="1"/>
</dbReference>
<dbReference type="HAMAP" id="MF_00403_B">
    <property type="entry name" value="Ribosomal_uS12_B"/>
    <property type="match status" value="1"/>
</dbReference>
<dbReference type="InterPro" id="IPR012340">
    <property type="entry name" value="NA-bd_OB-fold"/>
</dbReference>
<dbReference type="InterPro" id="IPR006032">
    <property type="entry name" value="Ribosomal_uS12"/>
</dbReference>
<dbReference type="InterPro" id="IPR005679">
    <property type="entry name" value="Ribosomal_uS12_bac"/>
</dbReference>
<dbReference type="NCBIfam" id="TIGR00981">
    <property type="entry name" value="rpsL_bact"/>
    <property type="match status" value="1"/>
</dbReference>
<dbReference type="PANTHER" id="PTHR11652">
    <property type="entry name" value="30S RIBOSOMAL PROTEIN S12 FAMILY MEMBER"/>
    <property type="match status" value="1"/>
</dbReference>
<dbReference type="Pfam" id="PF00164">
    <property type="entry name" value="Ribosom_S12_S23"/>
    <property type="match status" value="1"/>
</dbReference>
<dbReference type="PIRSF" id="PIRSF002133">
    <property type="entry name" value="Ribosomal_S12/S23"/>
    <property type="match status" value="1"/>
</dbReference>
<dbReference type="PRINTS" id="PR01034">
    <property type="entry name" value="RIBOSOMALS12"/>
</dbReference>
<dbReference type="SUPFAM" id="SSF50249">
    <property type="entry name" value="Nucleic acid-binding proteins"/>
    <property type="match status" value="1"/>
</dbReference>
<dbReference type="PROSITE" id="PS00055">
    <property type="entry name" value="RIBOSOMAL_S12"/>
    <property type="match status" value="1"/>
</dbReference>
<protein>
    <recommendedName>
        <fullName evidence="2">Small ribosomal subunit protein uS12</fullName>
    </recommendedName>
    <alternativeName>
        <fullName evidence="4">30S ribosomal protein S12</fullName>
    </alternativeName>
</protein>
<comment type="function">
    <text evidence="2">With S4 and S5 plays an important role in translational accuracy.</text>
</comment>
<comment type="function">
    <text evidence="2">Interacts with and stabilizes bases of the 16S rRNA that are involved in tRNA selection in the A site and with the mRNA backbone. Located at the interface of the 30S and 50S subunits, it traverses the body of the 30S subunit contacting proteins on the other side and probably holding the rRNA structure together. The combined cluster of proteins S8, S12 and S17 appears to hold together the shoulder and platform of the 30S subunit.</text>
</comment>
<comment type="subunit">
    <text evidence="2">Part of the 30S ribosomal subunit. Contacts proteins S8 and S17. May interact with IF1 in the 30S initiation complex.</text>
</comment>
<comment type="similarity">
    <text evidence="2">Belongs to the universal ribosomal protein uS12 family.</text>
</comment>
<accession>Q0SNC0</accession>
<accession>G0IS34</accession>